<protein>
    <recommendedName>
        <fullName>Interferon-stimulated gene 20 kDa protein</fullName>
        <ecNumber>3.1.13.1</ecNumber>
    </recommendedName>
    <alternativeName>
        <fullName>Promyelocytic leukemia nuclear body-associated protein ISG20</fullName>
    </alternativeName>
    <alternativeName>
        <fullName>Protein DnaQL</fullName>
    </alternativeName>
</protein>
<feature type="chain" id="PRO_0000084244" description="Interferon-stimulated gene 20 kDa protein">
    <location>
        <begin position="1"/>
        <end position="300"/>
    </location>
</feature>
<feature type="binding site" evidence="1">
    <location>
        <position position="11"/>
    </location>
    <ligand>
        <name>Mn(2+)</name>
        <dbReference type="ChEBI" id="CHEBI:29035"/>
        <label>1</label>
    </ligand>
</feature>
<feature type="binding site" evidence="1">
    <location>
        <position position="13"/>
    </location>
    <ligand>
        <name>Mn(2+)</name>
        <dbReference type="ChEBI" id="CHEBI:29035"/>
        <label>1</label>
    </ligand>
</feature>
<feature type="binding site" evidence="1">
    <location>
        <position position="90"/>
    </location>
    <ligand>
        <name>Mn(2+)</name>
        <dbReference type="ChEBI" id="CHEBI:29035"/>
        <label>2</label>
    </ligand>
</feature>
<feature type="binding site" evidence="1">
    <location>
        <position position="93"/>
    </location>
    <ligand>
        <name>Mn(2+)</name>
        <dbReference type="ChEBI" id="CHEBI:29035"/>
        <label>2</label>
    </ligand>
</feature>
<feature type="splice variant" id="VSP_012431" description="In isoform 2." evidence="5 6">
    <original>VLPGSLLGVGGCILPGTDILHLLLYVGMVRIADLRLLT</original>
    <variation>NNWRGHCSVEDARATMELYKISQRLRAQRGLPCPGTSD</variation>
    <location>
        <begin position="144"/>
        <end position="181"/>
    </location>
</feature>
<feature type="splice variant" id="VSP_012432" description="In isoform 2." evidence="5 6">
    <location>
        <begin position="182"/>
        <end position="300"/>
    </location>
</feature>
<reference key="1">
    <citation type="submission" date="1999-12" db="EMBL/GenBank/DDBJ databases">
        <title>Isolation of a novel mouse gene member of the DnaQ superfamily: characterization of the exonuclease protein product.</title>
        <authorList>
            <person name="Ramirez M.H."/>
            <person name="Shannon M.E."/>
            <person name="Thelen M.P."/>
        </authorList>
    </citation>
    <scope>NUCLEOTIDE SEQUENCE [MRNA] (ISOFORM 1)</scope>
</reference>
<reference key="2">
    <citation type="journal article" date="2005" name="Science">
        <title>The transcriptional landscape of the mammalian genome.</title>
        <authorList>
            <person name="Carninci P."/>
            <person name="Kasukawa T."/>
            <person name="Katayama S."/>
            <person name="Gough J."/>
            <person name="Frith M.C."/>
            <person name="Maeda N."/>
            <person name="Oyama R."/>
            <person name="Ravasi T."/>
            <person name="Lenhard B."/>
            <person name="Wells C."/>
            <person name="Kodzius R."/>
            <person name="Shimokawa K."/>
            <person name="Bajic V.B."/>
            <person name="Brenner S.E."/>
            <person name="Batalov S."/>
            <person name="Forrest A.R."/>
            <person name="Zavolan M."/>
            <person name="Davis M.J."/>
            <person name="Wilming L.G."/>
            <person name="Aidinis V."/>
            <person name="Allen J.E."/>
            <person name="Ambesi-Impiombato A."/>
            <person name="Apweiler R."/>
            <person name="Aturaliya R.N."/>
            <person name="Bailey T.L."/>
            <person name="Bansal M."/>
            <person name="Baxter L."/>
            <person name="Beisel K.W."/>
            <person name="Bersano T."/>
            <person name="Bono H."/>
            <person name="Chalk A.M."/>
            <person name="Chiu K.P."/>
            <person name="Choudhary V."/>
            <person name="Christoffels A."/>
            <person name="Clutterbuck D.R."/>
            <person name="Crowe M.L."/>
            <person name="Dalla E."/>
            <person name="Dalrymple B.P."/>
            <person name="de Bono B."/>
            <person name="Della Gatta G."/>
            <person name="di Bernardo D."/>
            <person name="Down T."/>
            <person name="Engstrom P."/>
            <person name="Fagiolini M."/>
            <person name="Faulkner G."/>
            <person name="Fletcher C.F."/>
            <person name="Fukushima T."/>
            <person name="Furuno M."/>
            <person name="Futaki S."/>
            <person name="Gariboldi M."/>
            <person name="Georgii-Hemming P."/>
            <person name="Gingeras T.R."/>
            <person name="Gojobori T."/>
            <person name="Green R.E."/>
            <person name="Gustincich S."/>
            <person name="Harbers M."/>
            <person name="Hayashi Y."/>
            <person name="Hensch T.K."/>
            <person name="Hirokawa N."/>
            <person name="Hill D."/>
            <person name="Huminiecki L."/>
            <person name="Iacono M."/>
            <person name="Ikeo K."/>
            <person name="Iwama A."/>
            <person name="Ishikawa T."/>
            <person name="Jakt M."/>
            <person name="Kanapin A."/>
            <person name="Katoh M."/>
            <person name="Kawasawa Y."/>
            <person name="Kelso J."/>
            <person name="Kitamura H."/>
            <person name="Kitano H."/>
            <person name="Kollias G."/>
            <person name="Krishnan S.P."/>
            <person name="Kruger A."/>
            <person name="Kummerfeld S.K."/>
            <person name="Kurochkin I.V."/>
            <person name="Lareau L.F."/>
            <person name="Lazarevic D."/>
            <person name="Lipovich L."/>
            <person name="Liu J."/>
            <person name="Liuni S."/>
            <person name="McWilliam S."/>
            <person name="Madan Babu M."/>
            <person name="Madera M."/>
            <person name="Marchionni L."/>
            <person name="Matsuda H."/>
            <person name="Matsuzawa S."/>
            <person name="Miki H."/>
            <person name="Mignone F."/>
            <person name="Miyake S."/>
            <person name="Morris K."/>
            <person name="Mottagui-Tabar S."/>
            <person name="Mulder N."/>
            <person name="Nakano N."/>
            <person name="Nakauchi H."/>
            <person name="Ng P."/>
            <person name="Nilsson R."/>
            <person name="Nishiguchi S."/>
            <person name="Nishikawa S."/>
            <person name="Nori F."/>
            <person name="Ohara O."/>
            <person name="Okazaki Y."/>
            <person name="Orlando V."/>
            <person name="Pang K.C."/>
            <person name="Pavan W.J."/>
            <person name="Pavesi G."/>
            <person name="Pesole G."/>
            <person name="Petrovsky N."/>
            <person name="Piazza S."/>
            <person name="Reed J."/>
            <person name="Reid J.F."/>
            <person name="Ring B.Z."/>
            <person name="Ringwald M."/>
            <person name="Rost B."/>
            <person name="Ruan Y."/>
            <person name="Salzberg S.L."/>
            <person name="Sandelin A."/>
            <person name="Schneider C."/>
            <person name="Schoenbach C."/>
            <person name="Sekiguchi K."/>
            <person name="Semple C.A."/>
            <person name="Seno S."/>
            <person name="Sessa L."/>
            <person name="Sheng Y."/>
            <person name="Shibata Y."/>
            <person name="Shimada H."/>
            <person name="Shimada K."/>
            <person name="Silva D."/>
            <person name="Sinclair B."/>
            <person name="Sperling S."/>
            <person name="Stupka E."/>
            <person name="Sugiura K."/>
            <person name="Sultana R."/>
            <person name="Takenaka Y."/>
            <person name="Taki K."/>
            <person name="Tammoja K."/>
            <person name="Tan S.L."/>
            <person name="Tang S."/>
            <person name="Taylor M.S."/>
            <person name="Tegner J."/>
            <person name="Teichmann S.A."/>
            <person name="Ueda H.R."/>
            <person name="van Nimwegen E."/>
            <person name="Verardo R."/>
            <person name="Wei C.L."/>
            <person name="Yagi K."/>
            <person name="Yamanishi H."/>
            <person name="Zabarovsky E."/>
            <person name="Zhu S."/>
            <person name="Zimmer A."/>
            <person name="Hide W."/>
            <person name="Bult C."/>
            <person name="Grimmond S.M."/>
            <person name="Teasdale R.D."/>
            <person name="Liu E.T."/>
            <person name="Brusic V."/>
            <person name="Quackenbush J."/>
            <person name="Wahlestedt C."/>
            <person name="Mattick J.S."/>
            <person name="Hume D.A."/>
            <person name="Kai C."/>
            <person name="Sasaki D."/>
            <person name="Tomaru Y."/>
            <person name="Fukuda S."/>
            <person name="Kanamori-Katayama M."/>
            <person name="Suzuki M."/>
            <person name="Aoki J."/>
            <person name="Arakawa T."/>
            <person name="Iida J."/>
            <person name="Imamura K."/>
            <person name="Itoh M."/>
            <person name="Kato T."/>
            <person name="Kawaji H."/>
            <person name="Kawagashira N."/>
            <person name="Kawashima T."/>
            <person name="Kojima M."/>
            <person name="Kondo S."/>
            <person name="Konno H."/>
            <person name="Nakano K."/>
            <person name="Ninomiya N."/>
            <person name="Nishio T."/>
            <person name="Okada M."/>
            <person name="Plessy C."/>
            <person name="Shibata K."/>
            <person name="Shiraki T."/>
            <person name="Suzuki S."/>
            <person name="Tagami M."/>
            <person name="Waki K."/>
            <person name="Watahiki A."/>
            <person name="Okamura-Oho Y."/>
            <person name="Suzuki H."/>
            <person name="Kawai J."/>
            <person name="Hayashizaki Y."/>
        </authorList>
    </citation>
    <scope>NUCLEOTIDE SEQUENCE [LARGE SCALE MRNA] (ISOFORM 2)</scope>
    <source>
        <strain>C57BL/6J</strain>
        <tissue>Small intestine</tissue>
    </source>
</reference>
<reference key="3">
    <citation type="journal article" date="2004" name="Genome Res.">
        <title>The status, quality, and expansion of the NIH full-length cDNA project: the Mammalian Gene Collection (MGC).</title>
        <authorList>
            <consortium name="The MGC Project Team"/>
        </authorList>
    </citation>
    <scope>NUCLEOTIDE SEQUENCE [LARGE SCALE MRNA] (ISOFORM 2)</scope>
    <source>
        <strain>FVB/N</strain>
        <tissue>Salivary gland</tissue>
    </source>
</reference>
<reference key="4">
    <citation type="journal article" date="2010" name="Cell">
        <title>A tissue-specific atlas of mouse protein phosphorylation and expression.</title>
        <authorList>
            <person name="Huttlin E.L."/>
            <person name="Jedrychowski M.P."/>
            <person name="Elias J.E."/>
            <person name="Goswami T."/>
            <person name="Rad R."/>
            <person name="Beausoleil S.A."/>
            <person name="Villen J."/>
            <person name="Haas W."/>
            <person name="Sowa M.E."/>
            <person name="Gygi S.P."/>
        </authorList>
    </citation>
    <scope>IDENTIFICATION BY MASS SPECTROMETRY [LARGE SCALE ANALYSIS]</scope>
    <source>
        <tissue>Spleen</tissue>
    </source>
</reference>
<reference key="5">
    <citation type="journal article" date="2018" name="MSphere">
        <title>The Interferon-Induced Exonuclease ISG20 Exerts Antiviral Activity through Upregulation of Type I Interferon Response Proteins.</title>
        <authorList>
            <person name="Weiss C.M."/>
            <person name="Trobaugh D.W."/>
            <person name="Sun C."/>
            <person name="Lucas T.M."/>
            <person name="Diamond M.S."/>
            <person name="Ryman K.D."/>
            <person name="Klimstra W.B."/>
        </authorList>
    </citation>
    <scope>FUNCTION</scope>
    <scope>DISRUPTION PHENOTYPE</scope>
</reference>
<reference key="6">
    <citation type="journal article" date="2019" name="PLoS Pathog.">
        <title>The interferon stimulated gene 20 protein (ISG20) is an innate defense antiviral factor that discriminates self versus non-self translation.</title>
        <authorList>
            <person name="Wu N."/>
            <person name="Nguyen X.N."/>
            <person name="Wang L."/>
            <person name="Appourchaux R."/>
            <person name="Zhang C."/>
            <person name="Panthu B."/>
            <person name="Gruffat H."/>
            <person name="Journo C."/>
            <person name="Alais S."/>
            <person name="Qin J."/>
            <person name="Zhang N."/>
            <person name="Tartour K."/>
            <person name="Catez F."/>
            <person name="Mahieux R."/>
            <person name="Ohlmann T."/>
            <person name="Liu M."/>
            <person name="Du B."/>
            <person name="Cimarelli A."/>
        </authorList>
    </citation>
    <scope>FUNCTION</scope>
    <scope>DISRUPTION PHENOTYPE</scope>
</reference>
<proteinExistence type="evidence at protein level"/>
<accession>Q9JL16</accession>
<accession>Q9CPZ5</accession>
<dbReference type="EC" id="3.1.13.1"/>
<dbReference type="EMBL" id="AF217484">
    <property type="protein sequence ID" value="AAF59917.1"/>
    <property type="molecule type" value="mRNA"/>
</dbReference>
<dbReference type="EMBL" id="AK008139">
    <property type="protein sequence ID" value="BAB25487.1"/>
    <property type="molecule type" value="mRNA"/>
</dbReference>
<dbReference type="EMBL" id="AK008171">
    <property type="protein sequence ID" value="BAB25509.1"/>
    <property type="molecule type" value="mRNA"/>
</dbReference>
<dbReference type="EMBL" id="AK008353">
    <property type="protein sequence ID" value="BAB25623.1"/>
    <property type="molecule type" value="mRNA"/>
</dbReference>
<dbReference type="EMBL" id="BC022751">
    <property type="protein sequence ID" value="AAH22751.1"/>
    <property type="molecule type" value="mRNA"/>
</dbReference>
<dbReference type="CCDS" id="CCDS21376.1">
    <molecule id="Q9JL16-2"/>
</dbReference>
<dbReference type="CCDS" id="CCDS71982.1">
    <molecule id="Q9JL16-1"/>
</dbReference>
<dbReference type="RefSeq" id="NP_001106999.1">
    <molecule id="Q9JL16-2"/>
    <property type="nucleotide sequence ID" value="NM_001113527.1"/>
</dbReference>
<dbReference type="RefSeq" id="NP_001278149.1">
    <molecule id="Q9JL16-1"/>
    <property type="nucleotide sequence ID" value="NM_001291220.1"/>
</dbReference>
<dbReference type="RefSeq" id="NP_001278150.1">
    <molecule id="Q9JL16-2"/>
    <property type="nucleotide sequence ID" value="NM_001291221.1"/>
</dbReference>
<dbReference type="RefSeq" id="NP_065608.2">
    <molecule id="Q9JL16-2"/>
    <property type="nucleotide sequence ID" value="NM_020583.5"/>
</dbReference>
<dbReference type="RefSeq" id="XP_006541089.1">
    <molecule id="Q9JL16-1"/>
    <property type="nucleotide sequence ID" value="XM_006541026.2"/>
</dbReference>
<dbReference type="RefSeq" id="XP_006541091.1">
    <molecule id="Q9JL16-1"/>
    <property type="nucleotide sequence ID" value="XM_006541028.5"/>
</dbReference>
<dbReference type="RefSeq" id="XP_030098687.1">
    <molecule id="Q9JL16-1"/>
    <property type="nucleotide sequence ID" value="XM_030242827.2"/>
</dbReference>
<dbReference type="SMR" id="Q9JL16"/>
<dbReference type="FunCoup" id="Q9JL16">
    <property type="interactions" value="76"/>
</dbReference>
<dbReference type="STRING" id="10090.ENSMUSP00000112621"/>
<dbReference type="iPTMnet" id="Q9JL16"/>
<dbReference type="PhosphoSitePlus" id="Q9JL16"/>
<dbReference type="jPOST" id="Q9JL16"/>
<dbReference type="PaxDb" id="10090-ENSMUSP00000040080"/>
<dbReference type="ProteomicsDB" id="269229">
    <molecule id="Q9JL16-1"/>
</dbReference>
<dbReference type="ProteomicsDB" id="269230">
    <molecule id="Q9JL16-2"/>
</dbReference>
<dbReference type="Pumba" id="Q9JL16"/>
<dbReference type="Antibodypedia" id="15665">
    <property type="antibodies" value="359 antibodies from 27 providers"/>
</dbReference>
<dbReference type="DNASU" id="57444"/>
<dbReference type="Ensembl" id="ENSMUST00000038142.15">
    <molecule id="Q9JL16-2"/>
    <property type="protein sequence ID" value="ENSMUSP00000040080.9"/>
    <property type="gene ID" value="ENSMUSG00000039236.19"/>
</dbReference>
<dbReference type="Ensembl" id="ENSMUST00000118867.8">
    <molecule id="Q9JL16-2"/>
    <property type="protein sequence ID" value="ENSMUSP00000112480.2"/>
    <property type="gene ID" value="ENSMUSG00000039236.19"/>
</dbReference>
<dbReference type="Ensembl" id="ENSMUST00000120331.4">
    <molecule id="Q9JL16-2"/>
    <property type="protein sequence ID" value="ENSMUSP00000113255.2"/>
    <property type="gene ID" value="ENSMUSG00000039236.19"/>
</dbReference>
<dbReference type="Ensembl" id="ENSMUST00000121645.8">
    <molecule id="Q9JL16-1"/>
    <property type="protein sequence ID" value="ENSMUSP00000112621.2"/>
    <property type="gene ID" value="ENSMUSG00000039236.19"/>
</dbReference>
<dbReference type="GeneID" id="57444"/>
<dbReference type="KEGG" id="mmu:57444"/>
<dbReference type="UCSC" id="uc009hxt.2">
    <molecule id="Q9JL16-1"/>
    <property type="organism name" value="mouse"/>
</dbReference>
<dbReference type="AGR" id="MGI:1928895"/>
<dbReference type="CTD" id="3669"/>
<dbReference type="MGI" id="MGI:1928895">
    <property type="gene designation" value="Isg20"/>
</dbReference>
<dbReference type="VEuPathDB" id="HostDB:ENSMUSG00000039236"/>
<dbReference type="eggNOG" id="KOG2249">
    <property type="taxonomic scope" value="Eukaryota"/>
</dbReference>
<dbReference type="GeneTree" id="ENSGT00940000160781"/>
<dbReference type="HOGENOM" id="CLU_022453_3_1_1"/>
<dbReference type="InParanoid" id="Q9JL16"/>
<dbReference type="OMA" id="NWPCALP"/>
<dbReference type="OrthoDB" id="16516at2759"/>
<dbReference type="PhylomeDB" id="Q9JL16"/>
<dbReference type="TreeFam" id="TF354340"/>
<dbReference type="BioGRID-ORCS" id="57444">
    <property type="hits" value="2 hits in 82 CRISPR screens"/>
</dbReference>
<dbReference type="ChiTaRS" id="Isg20">
    <property type="organism name" value="mouse"/>
</dbReference>
<dbReference type="PRO" id="PR:Q9JL16"/>
<dbReference type="Proteomes" id="UP000000589">
    <property type="component" value="Chromosome 7"/>
</dbReference>
<dbReference type="RNAct" id="Q9JL16">
    <property type="molecule type" value="protein"/>
</dbReference>
<dbReference type="Bgee" id="ENSMUSG00000039236">
    <property type="expression patterns" value="Expressed in femorotibial joint and 130 other cell types or tissues"/>
</dbReference>
<dbReference type="ExpressionAtlas" id="Q9JL16">
    <property type="expression patterns" value="baseline and differential"/>
</dbReference>
<dbReference type="GO" id="GO:0015030">
    <property type="term" value="C:Cajal body"/>
    <property type="evidence" value="ECO:0000250"/>
    <property type="project" value="UniProtKB"/>
</dbReference>
<dbReference type="GO" id="GO:0005737">
    <property type="term" value="C:cytoplasm"/>
    <property type="evidence" value="ECO:0000250"/>
    <property type="project" value="UniProtKB"/>
</dbReference>
<dbReference type="GO" id="GO:0005730">
    <property type="term" value="C:nucleolus"/>
    <property type="evidence" value="ECO:0000250"/>
    <property type="project" value="UniProtKB"/>
</dbReference>
<dbReference type="GO" id="GO:0005634">
    <property type="term" value="C:nucleus"/>
    <property type="evidence" value="ECO:0000250"/>
    <property type="project" value="UniProtKB"/>
</dbReference>
<dbReference type="GO" id="GO:0000932">
    <property type="term" value="C:P-body"/>
    <property type="evidence" value="ECO:0007669"/>
    <property type="project" value="UniProtKB-SubCell"/>
</dbReference>
<dbReference type="GO" id="GO:0004527">
    <property type="term" value="F:exonuclease activity"/>
    <property type="evidence" value="ECO:0000250"/>
    <property type="project" value="UniProtKB"/>
</dbReference>
<dbReference type="GO" id="GO:0008859">
    <property type="term" value="F:exoribonuclease II activity"/>
    <property type="evidence" value="ECO:0007669"/>
    <property type="project" value="UniProtKB-EC"/>
</dbReference>
<dbReference type="GO" id="GO:0046872">
    <property type="term" value="F:metal ion binding"/>
    <property type="evidence" value="ECO:0007669"/>
    <property type="project" value="UniProtKB-KW"/>
</dbReference>
<dbReference type="GO" id="GO:0030619">
    <property type="term" value="F:U1 snRNA binding"/>
    <property type="evidence" value="ECO:0000250"/>
    <property type="project" value="UniProtKB"/>
</dbReference>
<dbReference type="GO" id="GO:0030620">
    <property type="term" value="F:U2 snRNA binding"/>
    <property type="evidence" value="ECO:0000250"/>
    <property type="project" value="UniProtKB"/>
</dbReference>
<dbReference type="GO" id="GO:0034511">
    <property type="term" value="F:U3 snoRNA binding"/>
    <property type="evidence" value="ECO:0000250"/>
    <property type="project" value="UniProtKB"/>
</dbReference>
<dbReference type="GO" id="GO:0051607">
    <property type="term" value="P:defense response to virus"/>
    <property type="evidence" value="ECO:0000250"/>
    <property type="project" value="UniProtKB"/>
</dbReference>
<dbReference type="GO" id="GO:0045087">
    <property type="term" value="P:innate immune response"/>
    <property type="evidence" value="ECO:0007669"/>
    <property type="project" value="UniProtKB-KW"/>
</dbReference>
<dbReference type="GO" id="GO:0006364">
    <property type="term" value="P:rRNA processing"/>
    <property type="evidence" value="ECO:0007669"/>
    <property type="project" value="UniProtKB-KW"/>
</dbReference>
<dbReference type="Gene3D" id="3.30.420.10">
    <property type="entry name" value="Ribonuclease H-like superfamily/Ribonuclease H"/>
    <property type="match status" value="1"/>
</dbReference>
<dbReference type="InterPro" id="IPR013520">
    <property type="entry name" value="Exonuclease_RNaseT/DNA_pol3"/>
</dbReference>
<dbReference type="InterPro" id="IPR047021">
    <property type="entry name" value="REXO1/3/4-like"/>
</dbReference>
<dbReference type="InterPro" id="IPR012337">
    <property type="entry name" value="RNaseH-like_sf"/>
</dbReference>
<dbReference type="InterPro" id="IPR036397">
    <property type="entry name" value="RNaseH_sf"/>
</dbReference>
<dbReference type="PANTHER" id="PTHR12801:SF59">
    <property type="entry name" value="INTERFERON-STIMULATED GENE 20 KDA PROTEIN"/>
    <property type="match status" value="1"/>
</dbReference>
<dbReference type="PANTHER" id="PTHR12801">
    <property type="entry name" value="RNA EXONUCLEASE REXO1 / RECO3 FAMILY MEMBER-RELATED"/>
    <property type="match status" value="1"/>
</dbReference>
<dbReference type="Pfam" id="PF00929">
    <property type="entry name" value="RNase_T"/>
    <property type="match status" value="1"/>
</dbReference>
<dbReference type="SMART" id="SM00479">
    <property type="entry name" value="EXOIII"/>
    <property type="match status" value="1"/>
</dbReference>
<dbReference type="SUPFAM" id="SSF53098">
    <property type="entry name" value="Ribonuclease H-like"/>
    <property type="match status" value="1"/>
</dbReference>
<organism>
    <name type="scientific">Mus musculus</name>
    <name type="common">Mouse</name>
    <dbReference type="NCBI Taxonomy" id="10090"/>
    <lineage>
        <taxon>Eukaryota</taxon>
        <taxon>Metazoa</taxon>
        <taxon>Chordata</taxon>
        <taxon>Craniata</taxon>
        <taxon>Vertebrata</taxon>
        <taxon>Euteleostomi</taxon>
        <taxon>Mammalia</taxon>
        <taxon>Eutheria</taxon>
        <taxon>Euarchontoglires</taxon>
        <taxon>Glires</taxon>
        <taxon>Rodentia</taxon>
        <taxon>Myomorpha</taxon>
        <taxon>Muroidea</taxon>
        <taxon>Muridae</taxon>
        <taxon>Murinae</taxon>
        <taxon>Mus</taxon>
        <taxon>Mus</taxon>
    </lineage>
</organism>
<comment type="function">
    <text evidence="2 3 4">Interferon-induced antiviral exoribonuclease that acts mainly on single-stranded RNA. Inhibition of several viruses does not involve the degradation of viral RNAs, but rather the inhibition of translation of viral proteins (PubMed:30232164). Exerts a translational control over a large panel of non-self RNA substrates while sparing endogenous transcripts. This activity correlates with the protein's ability to localize in cytoplasmic processing bodies (PubMed:31600344). May also act as master regulator of over hundred interferon stimulated genes leading to viral genome translation inhibition (PubMed:30232164). May play additional roles in the maturation of snRNAs and rRNAs, and in ribosome biogenesis (By similarity).</text>
</comment>
<comment type="catalytic activity">
    <reaction>
        <text>Exonucleolytic cleavage in the 3'- to 5'-direction to yield nucleoside 5'-phosphates.</text>
        <dbReference type="EC" id="3.1.13.1"/>
    </reaction>
</comment>
<comment type="cofactor">
    <cofactor>
        <name>Mn(2+)</name>
        <dbReference type="ChEBI" id="CHEBI:29035"/>
    </cofactor>
    <text>Binds 2 manganese ions per subunit.</text>
</comment>
<comment type="biophysicochemical properties">
    <phDependence>
        <text>Optimum pH is 7.0.</text>
    </phDependence>
</comment>
<comment type="subunit">
    <text evidence="1">Associates with PML and SP100 in the PML NB complex. Associates with survival motor neuron protein (SMN)-containing macromolecular nuclear complexes and U1 and U2 snRNAs and U3 snoRNA (By similarity).</text>
</comment>
<comment type="subcellular location">
    <subcellularLocation>
        <location evidence="3">Nucleus</location>
    </subcellularLocation>
    <subcellularLocation>
        <location evidence="1">Nucleus</location>
        <location evidence="1">Nucleolus</location>
    </subcellularLocation>
    <subcellularLocation>
        <location evidence="1">Cytoplasm</location>
    </subcellularLocation>
    <subcellularLocation>
        <location evidence="3">Nucleus</location>
        <location evidence="3">Cajal body</location>
    </subcellularLocation>
    <subcellularLocation>
        <location evidence="4">Cytoplasm</location>
        <location evidence="4">P-body</location>
    </subcellularLocation>
</comment>
<comment type="alternative products">
    <event type="alternative splicing"/>
    <isoform>
        <id>Q9JL16-1</id>
        <name>1</name>
        <sequence type="displayed"/>
    </isoform>
    <isoform>
        <id>Q9JL16-2</id>
        <name>2</name>
        <sequence type="described" ref="VSP_012431 VSP_012432"/>
    </isoform>
</comment>
<comment type="induction">
    <text evidence="1">Induced by interferons alpha and beta. Weaker induction was seen with interferon gamma. Increased expression was seen at the transcriptional level (By similarity).</text>
</comment>
<comment type="disruption phenotype">
    <text evidence="3 4">ISG20-deletion mice exhibit higher mortality following vesicular stomatitis virus challenge (PubMed:31600344). They also show a slightly earlier onset of symptoms when infected with venezuelan equine encephalitis virus. However, weight loss and the median survival times for infected mice are essentially equivalent between the deletion mutant and the WT.</text>
</comment>
<comment type="similarity">
    <text evidence="7">Belongs to the exonuclease superfamily.</text>
</comment>
<name>ISG20_MOUSE</name>
<evidence type="ECO:0000250" key="1"/>
<evidence type="ECO:0000250" key="2">
    <source>
        <dbReference type="UniProtKB" id="Q96AZ6"/>
    </source>
</evidence>
<evidence type="ECO:0000269" key="3">
    <source>
    </source>
</evidence>
<evidence type="ECO:0000269" key="4">
    <source>
    </source>
</evidence>
<evidence type="ECO:0000303" key="5">
    <source>
    </source>
</evidence>
<evidence type="ECO:0000303" key="6">
    <source>
    </source>
</evidence>
<evidence type="ECO:0000305" key="7"/>
<keyword id="KW-0025">Alternative splicing</keyword>
<keyword id="KW-0051">Antiviral defense</keyword>
<keyword id="KW-0963">Cytoplasm</keyword>
<keyword id="KW-0269">Exonuclease</keyword>
<keyword id="KW-0378">Hydrolase</keyword>
<keyword id="KW-0391">Immunity</keyword>
<keyword id="KW-0399">Innate immunity</keyword>
<keyword id="KW-0464">Manganese</keyword>
<keyword id="KW-0479">Metal-binding</keyword>
<keyword id="KW-0540">Nuclease</keyword>
<keyword id="KW-0539">Nucleus</keyword>
<keyword id="KW-1185">Reference proteome</keyword>
<keyword id="KW-0694">RNA-binding</keyword>
<keyword id="KW-0698">rRNA processing</keyword>
<sequence>MAGIPEVVAMDCEMVGLGPQRVSGLARCSIVNIHGAVLYDKYIRPEGEITDYRTQVSGVTPQHMVRATPFGEARLEILQLLKGKLVVGHDLKHDFNALKEDMSKYTIYDTSTDRLLWHEAKLQYYSRVSLRLLCKRLLHKNIQVLPGSLLGVGGCILPGTDILHLLLYVGMVRIADLRLLTPFLPPSCLACPLLPESLASARSHAVISALSSSSHLLTPLPNPSQGPQGHVDRLSGQLQDWGGSPLAPALPVSAEQLAGPLLCGRCQGHNGALQNLSATQSPARAALPWDVRLNFILIQG</sequence>
<gene>
    <name type="primary">Isg20</name>
</gene>